<comment type="function">
    <text evidence="1">Catalyzes the reaction of cyanate with bicarbonate to produce ammonia and carbon dioxide.</text>
</comment>
<comment type="catalytic activity">
    <reaction evidence="1">
        <text>cyanate + hydrogencarbonate + 3 H(+) = NH4(+) + 2 CO2</text>
        <dbReference type="Rhea" id="RHEA:11120"/>
        <dbReference type="ChEBI" id="CHEBI:15378"/>
        <dbReference type="ChEBI" id="CHEBI:16526"/>
        <dbReference type="ChEBI" id="CHEBI:17544"/>
        <dbReference type="ChEBI" id="CHEBI:28938"/>
        <dbReference type="ChEBI" id="CHEBI:29195"/>
        <dbReference type="EC" id="4.2.1.104"/>
    </reaction>
</comment>
<comment type="similarity">
    <text evidence="1">Belongs to the cyanase family.</text>
</comment>
<keyword id="KW-0456">Lyase</keyword>
<keyword id="KW-1185">Reference proteome</keyword>
<name>CYNS_POLAQ</name>
<proteinExistence type="inferred from homology"/>
<reference key="1">
    <citation type="journal article" date="2012" name="Stand. Genomic Sci.">
        <title>Complete genome sequence of Polynucleobacter necessarius subsp. asymbioticus type strain (QLW-P1DMWA-1(T)).</title>
        <authorList>
            <person name="Meincke L."/>
            <person name="Copeland A."/>
            <person name="Lapidus A."/>
            <person name="Lucas S."/>
            <person name="Berry K.W."/>
            <person name="Del Rio T.G."/>
            <person name="Hammon N."/>
            <person name="Dalin E."/>
            <person name="Tice H."/>
            <person name="Pitluck S."/>
            <person name="Richardson P."/>
            <person name="Bruce D."/>
            <person name="Goodwin L."/>
            <person name="Han C."/>
            <person name="Tapia R."/>
            <person name="Detter J.C."/>
            <person name="Schmutz J."/>
            <person name="Brettin T."/>
            <person name="Larimer F."/>
            <person name="Land M."/>
            <person name="Hauser L."/>
            <person name="Kyrpides N.C."/>
            <person name="Ivanova N."/>
            <person name="Goker M."/>
            <person name="Woyke T."/>
            <person name="Wu Q.L."/>
            <person name="Pockl M."/>
            <person name="Hahn M.W."/>
            <person name="Klenk H.P."/>
        </authorList>
    </citation>
    <scope>NUCLEOTIDE SEQUENCE [LARGE SCALE GENOMIC DNA]</scope>
    <source>
        <strain>DSM 18221 / CIP 109841 / QLW-P1DMWA-1</strain>
    </source>
</reference>
<gene>
    <name evidence="1" type="primary">cynS</name>
    <name type="ordered locus">Pnuc_0994</name>
</gene>
<accession>A4SXJ6</accession>
<feature type="chain" id="PRO_1000081864" description="Cyanate hydratase">
    <location>
        <begin position="1"/>
        <end position="147"/>
    </location>
</feature>
<feature type="active site" evidence="1">
    <location>
        <position position="88"/>
    </location>
</feature>
<feature type="active site" evidence="1">
    <location>
        <position position="91"/>
    </location>
</feature>
<feature type="active site" evidence="1">
    <location>
        <position position="114"/>
    </location>
</feature>
<protein>
    <recommendedName>
        <fullName evidence="1">Cyanate hydratase</fullName>
        <shortName evidence="1">Cyanase</shortName>
        <ecNumber evidence="1">4.2.1.104</ecNumber>
    </recommendedName>
    <alternativeName>
        <fullName evidence="1">Cyanate hydrolase</fullName>
    </alternativeName>
    <alternativeName>
        <fullName evidence="1">Cyanate lyase</fullName>
    </alternativeName>
</protein>
<dbReference type="EC" id="4.2.1.104" evidence="1"/>
<dbReference type="EMBL" id="CP000655">
    <property type="protein sequence ID" value="ABP34210.1"/>
    <property type="molecule type" value="Genomic_DNA"/>
</dbReference>
<dbReference type="RefSeq" id="WP_011902835.1">
    <property type="nucleotide sequence ID" value="NC_009379.1"/>
</dbReference>
<dbReference type="SMR" id="A4SXJ6"/>
<dbReference type="GeneID" id="31481366"/>
<dbReference type="KEGG" id="pnu:Pnuc_0994"/>
<dbReference type="eggNOG" id="COG1513">
    <property type="taxonomic scope" value="Bacteria"/>
</dbReference>
<dbReference type="HOGENOM" id="CLU_103452_1_0_4"/>
<dbReference type="Proteomes" id="UP000000231">
    <property type="component" value="Chromosome"/>
</dbReference>
<dbReference type="GO" id="GO:0008824">
    <property type="term" value="F:cyanate hydratase activity"/>
    <property type="evidence" value="ECO:0007669"/>
    <property type="project" value="UniProtKB-UniRule"/>
</dbReference>
<dbReference type="GO" id="GO:0003677">
    <property type="term" value="F:DNA binding"/>
    <property type="evidence" value="ECO:0007669"/>
    <property type="project" value="InterPro"/>
</dbReference>
<dbReference type="GO" id="GO:0009439">
    <property type="term" value="P:cyanate metabolic process"/>
    <property type="evidence" value="ECO:0007669"/>
    <property type="project" value="UniProtKB-UniRule"/>
</dbReference>
<dbReference type="CDD" id="cd00559">
    <property type="entry name" value="Cyanase_C"/>
    <property type="match status" value="1"/>
</dbReference>
<dbReference type="Gene3D" id="3.30.1160.10">
    <property type="entry name" value="Cyanate lyase, C-terminal domain"/>
    <property type="match status" value="1"/>
</dbReference>
<dbReference type="Gene3D" id="1.10.260.40">
    <property type="entry name" value="lambda repressor-like DNA-binding domains"/>
    <property type="match status" value="1"/>
</dbReference>
<dbReference type="HAMAP" id="MF_00535">
    <property type="entry name" value="Cyanate_hydrat"/>
    <property type="match status" value="1"/>
</dbReference>
<dbReference type="InterPro" id="IPR008076">
    <property type="entry name" value="Cyanase"/>
</dbReference>
<dbReference type="InterPro" id="IPR003712">
    <property type="entry name" value="Cyanate_lyase_C"/>
</dbReference>
<dbReference type="InterPro" id="IPR036581">
    <property type="entry name" value="Cyanate_lyase_C_sf"/>
</dbReference>
<dbReference type="InterPro" id="IPR048564">
    <property type="entry name" value="CYNS_N"/>
</dbReference>
<dbReference type="InterPro" id="IPR010982">
    <property type="entry name" value="Lambda_DNA-bd_dom_sf"/>
</dbReference>
<dbReference type="NCBIfam" id="TIGR00673">
    <property type="entry name" value="cynS"/>
    <property type="match status" value="1"/>
</dbReference>
<dbReference type="NCBIfam" id="NF002773">
    <property type="entry name" value="PRK02866.1"/>
    <property type="match status" value="1"/>
</dbReference>
<dbReference type="PANTHER" id="PTHR34186">
    <property type="entry name" value="CYANATE HYDRATASE"/>
    <property type="match status" value="1"/>
</dbReference>
<dbReference type="PANTHER" id="PTHR34186:SF2">
    <property type="entry name" value="CYANATE HYDRATASE"/>
    <property type="match status" value="1"/>
</dbReference>
<dbReference type="Pfam" id="PF02560">
    <property type="entry name" value="Cyanate_lyase"/>
    <property type="match status" value="1"/>
</dbReference>
<dbReference type="Pfam" id="PF21291">
    <property type="entry name" value="CYNS_N"/>
    <property type="match status" value="1"/>
</dbReference>
<dbReference type="PIRSF" id="PIRSF001263">
    <property type="entry name" value="Cyanate_hydratas"/>
    <property type="match status" value="1"/>
</dbReference>
<dbReference type="PRINTS" id="PR01693">
    <property type="entry name" value="CYANASE"/>
</dbReference>
<dbReference type="SMART" id="SM01116">
    <property type="entry name" value="Cyanate_lyase"/>
    <property type="match status" value="1"/>
</dbReference>
<dbReference type="SUPFAM" id="SSF55234">
    <property type="entry name" value="Cyanase C-terminal domain"/>
    <property type="match status" value="1"/>
</dbReference>
<dbReference type="SUPFAM" id="SSF47413">
    <property type="entry name" value="lambda repressor-like DNA-binding domains"/>
    <property type="match status" value="1"/>
</dbReference>
<organism>
    <name type="scientific">Polynucleobacter asymbioticus (strain DSM 18221 / CIP 109841 / QLW-P1DMWA-1)</name>
    <name type="common">Polynucleobacter necessarius subsp. asymbioticus</name>
    <dbReference type="NCBI Taxonomy" id="312153"/>
    <lineage>
        <taxon>Bacteria</taxon>
        <taxon>Pseudomonadati</taxon>
        <taxon>Pseudomonadota</taxon>
        <taxon>Betaproteobacteria</taxon>
        <taxon>Burkholderiales</taxon>
        <taxon>Burkholderiaceae</taxon>
        <taxon>Polynucleobacter</taxon>
    </lineage>
</organism>
<evidence type="ECO:0000255" key="1">
    <source>
        <dbReference type="HAMAP-Rule" id="MF_00535"/>
    </source>
</evidence>
<sequence>MDRSVVTQKIIEAKVRNGMKWSDIAKAIGESKEWVTAGCLGQMTFTKVQAEAAGKLFDLTDEEMAWLQIVPYKGSLPTAVPTDPLIYRWYEIVSVYGTTIKELIHEEFGDGIMSAIDFSMDIQREPDPKGDRVQVVLSGKYLSYKTY</sequence>